<accession>Q0T003</accession>
<gene>
    <name evidence="1" type="primary">rpmJ</name>
    <name type="ordered locus">SFV_3319</name>
</gene>
<sequence length="38" mass="4364">MKVRASVKKLCRNCKIVKRDGVIRVICSAEPKHKQRQG</sequence>
<dbReference type="EMBL" id="CP000266">
    <property type="protein sequence ID" value="ABF05362.1"/>
    <property type="molecule type" value="Genomic_DNA"/>
</dbReference>
<dbReference type="RefSeq" id="WP_000868187.1">
    <property type="nucleotide sequence ID" value="NC_008258.1"/>
</dbReference>
<dbReference type="SMR" id="Q0T003"/>
<dbReference type="GeneID" id="98390421"/>
<dbReference type="KEGG" id="sfv:SFV_3319"/>
<dbReference type="HOGENOM" id="CLU_135723_6_2_6"/>
<dbReference type="Proteomes" id="UP000000659">
    <property type="component" value="Chromosome"/>
</dbReference>
<dbReference type="GO" id="GO:0005737">
    <property type="term" value="C:cytoplasm"/>
    <property type="evidence" value="ECO:0007669"/>
    <property type="project" value="UniProtKB-ARBA"/>
</dbReference>
<dbReference type="GO" id="GO:1990904">
    <property type="term" value="C:ribonucleoprotein complex"/>
    <property type="evidence" value="ECO:0007669"/>
    <property type="project" value="UniProtKB-KW"/>
</dbReference>
<dbReference type="GO" id="GO:0005840">
    <property type="term" value="C:ribosome"/>
    <property type="evidence" value="ECO:0007669"/>
    <property type="project" value="UniProtKB-KW"/>
</dbReference>
<dbReference type="GO" id="GO:0003735">
    <property type="term" value="F:structural constituent of ribosome"/>
    <property type="evidence" value="ECO:0007669"/>
    <property type="project" value="InterPro"/>
</dbReference>
<dbReference type="GO" id="GO:0006412">
    <property type="term" value="P:translation"/>
    <property type="evidence" value="ECO:0007669"/>
    <property type="project" value="UniProtKB-UniRule"/>
</dbReference>
<dbReference type="HAMAP" id="MF_00251">
    <property type="entry name" value="Ribosomal_bL36"/>
    <property type="match status" value="1"/>
</dbReference>
<dbReference type="InterPro" id="IPR000473">
    <property type="entry name" value="Ribosomal_bL36"/>
</dbReference>
<dbReference type="InterPro" id="IPR035977">
    <property type="entry name" value="Ribosomal_bL36_sp"/>
</dbReference>
<dbReference type="NCBIfam" id="TIGR01022">
    <property type="entry name" value="rpmJ_bact"/>
    <property type="match status" value="1"/>
</dbReference>
<dbReference type="PANTHER" id="PTHR42888">
    <property type="entry name" value="50S RIBOSOMAL PROTEIN L36, CHLOROPLASTIC"/>
    <property type="match status" value="1"/>
</dbReference>
<dbReference type="PANTHER" id="PTHR42888:SF1">
    <property type="entry name" value="LARGE RIBOSOMAL SUBUNIT PROTEIN BL36C"/>
    <property type="match status" value="1"/>
</dbReference>
<dbReference type="Pfam" id="PF00444">
    <property type="entry name" value="Ribosomal_L36"/>
    <property type="match status" value="1"/>
</dbReference>
<dbReference type="SUPFAM" id="SSF57840">
    <property type="entry name" value="Ribosomal protein L36"/>
    <property type="match status" value="1"/>
</dbReference>
<dbReference type="PROSITE" id="PS00828">
    <property type="entry name" value="RIBOSOMAL_L36"/>
    <property type="match status" value="1"/>
</dbReference>
<proteinExistence type="inferred from homology"/>
<organism>
    <name type="scientific">Shigella flexneri serotype 5b (strain 8401)</name>
    <dbReference type="NCBI Taxonomy" id="373384"/>
    <lineage>
        <taxon>Bacteria</taxon>
        <taxon>Pseudomonadati</taxon>
        <taxon>Pseudomonadota</taxon>
        <taxon>Gammaproteobacteria</taxon>
        <taxon>Enterobacterales</taxon>
        <taxon>Enterobacteriaceae</taxon>
        <taxon>Shigella</taxon>
    </lineage>
</organism>
<keyword id="KW-0687">Ribonucleoprotein</keyword>
<keyword id="KW-0689">Ribosomal protein</keyword>
<name>RL36_SHIF8</name>
<protein>
    <recommendedName>
        <fullName evidence="1">Large ribosomal subunit protein bL36</fullName>
    </recommendedName>
    <alternativeName>
        <fullName evidence="2">50S ribosomal protein L36</fullName>
    </alternativeName>
</protein>
<evidence type="ECO:0000255" key="1">
    <source>
        <dbReference type="HAMAP-Rule" id="MF_00251"/>
    </source>
</evidence>
<evidence type="ECO:0000305" key="2"/>
<comment type="similarity">
    <text evidence="1">Belongs to the bacterial ribosomal protein bL36 family.</text>
</comment>
<reference key="1">
    <citation type="journal article" date="2006" name="BMC Genomics">
        <title>Complete genome sequence of Shigella flexneri 5b and comparison with Shigella flexneri 2a.</title>
        <authorList>
            <person name="Nie H."/>
            <person name="Yang F."/>
            <person name="Zhang X."/>
            <person name="Yang J."/>
            <person name="Chen L."/>
            <person name="Wang J."/>
            <person name="Xiong Z."/>
            <person name="Peng J."/>
            <person name="Sun L."/>
            <person name="Dong J."/>
            <person name="Xue Y."/>
            <person name="Xu X."/>
            <person name="Chen S."/>
            <person name="Yao Z."/>
            <person name="Shen Y."/>
            <person name="Jin Q."/>
        </authorList>
    </citation>
    <scope>NUCLEOTIDE SEQUENCE [LARGE SCALE GENOMIC DNA]</scope>
    <source>
        <strain>8401</strain>
    </source>
</reference>
<feature type="chain" id="PRO_0000302298" description="Large ribosomal subunit protein bL36">
    <location>
        <begin position="1"/>
        <end position="38"/>
    </location>
</feature>